<evidence type="ECO:0000305" key="1"/>
<keyword id="KW-1185">Reference proteome</keyword>
<protein>
    <recommendedName>
        <fullName>UPF0328 protein ECU05_0050</fullName>
    </recommendedName>
</protein>
<sequence>MNTTHVPEPHRTEQHAENQRHWRKILGIAPIVSIAFPATMYFISDEDSFEDSLFLRFITVLLPFSYSAVQYALLHTNWKSHNKPERILQSILYYTLNLLFLAFSIISILSIIAFTLAEWEDDDWENNNDPIIFSFILPSFTVPLTYLLSTSCCLVPGQIGFTDTGINVLVDILILLCSAGDLVPAFDEVKHCYYFAIISSILILIRLLREKLSPEKQSPPPTAPWRIAVFVLILISIVIAYALLAYLIMNADIFDNYYSSLFDKMKNIFSSKPDE</sequence>
<dbReference type="EMBL" id="AL590445">
    <property type="protein sequence ID" value="CAD26522.1"/>
    <property type="molecule type" value="Genomic_DNA"/>
</dbReference>
<dbReference type="RefSeq" id="NP_597345.1">
    <property type="nucleotide sequence ID" value="NM_001041211.1"/>
</dbReference>
<dbReference type="SMR" id="Q8SVN9"/>
<dbReference type="GeneID" id="859009"/>
<dbReference type="KEGG" id="ecu:ECU05_0050"/>
<dbReference type="VEuPathDB" id="MicrosporidiaDB:ECU05_0050"/>
<dbReference type="HOGENOM" id="CLU_059413_0_0_1"/>
<dbReference type="InParanoid" id="Q8SVN9"/>
<dbReference type="Proteomes" id="UP000000819">
    <property type="component" value="Chromosome V"/>
</dbReference>
<dbReference type="InterPro" id="IPR019081">
    <property type="entry name" value="UPF0328"/>
</dbReference>
<dbReference type="Pfam" id="PF09591">
    <property type="entry name" value="DUF2463"/>
    <property type="match status" value="1"/>
</dbReference>
<name>Y505_ENCCU</name>
<accession>Q8SVN9</accession>
<feature type="chain" id="PRO_0000223124" description="UPF0328 protein ECU05_0050">
    <location>
        <begin position="1"/>
        <end position="275"/>
    </location>
</feature>
<proteinExistence type="inferred from homology"/>
<gene>
    <name type="ordered locus">ECU05_0050</name>
</gene>
<reference key="1">
    <citation type="journal article" date="2001" name="Nature">
        <title>Genome sequence and gene compaction of the eukaryote parasite Encephalitozoon cuniculi.</title>
        <authorList>
            <person name="Katinka M.D."/>
            <person name="Duprat S."/>
            <person name="Cornillot E."/>
            <person name="Metenier G."/>
            <person name="Thomarat F."/>
            <person name="Prensier G."/>
            <person name="Barbe V."/>
            <person name="Peyretaillade E."/>
            <person name="Brottier P."/>
            <person name="Wincker P."/>
            <person name="Delbac F."/>
            <person name="El Alaoui H."/>
            <person name="Peyret P."/>
            <person name="Saurin W."/>
            <person name="Gouy M."/>
            <person name="Weissenbach J."/>
            <person name="Vivares C.P."/>
        </authorList>
    </citation>
    <scope>NUCLEOTIDE SEQUENCE [LARGE SCALE GENOMIC DNA]</scope>
    <source>
        <strain>GB-M1</strain>
    </source>
</reference>
<organism>
    <name type="scientific">Encephalitozoon cuniculi (strain GB-M1)</name>
    <name type="common">Microsporidian parasite</name>
    <dbReference type="NCBI Taxonomy" id="284813"/>
    <lineage>
        <taxon>Eukaryota</taxon>
        <taxon>Fungi</taxon>
        <taxon>Fungi incertae sedis</taxon>
        <taxon>Microsporidia</taxon>
        <taxon>Unikaryonidae</taxon>
        <taxon>Encephalitozoon</taxon>
    </lineage>
</organism>
<comment type="similarity">
    <text evidence="1">Belongs to the UPF0328 family.</text>
</comment>